<dbReference type="GO" id="GO:0007608">
    <property type="term" value="P:sensory perception of smell"/>
    <property type="evidence" value="ECO:0007669"/>
    <property type="project" value="UniProtKB-KW"/>
</dbReference>
<sequence length="18" mass="1967">TAEVMSHVXAHFGKALEE</sequence>
<protein>
    <recommendedName>
        <fullName>General odorant-binding protein</fullName>
        <shortName>GOBP</shortName>
    </recommendedName>
</protein>
<evidence type="ECO:0000305" key="1"/>
<proteinExistence type="evidence at protein level"/>
<reference key="1">
    <citation type="journal article" date="1991" name="J. Neurobiol.">
        <title>Odorant-binding-protein subfamilies associate with distinct classes of olfactory receptor neurons in insects.</title>
        <authorList>
            <person name="Vogt R.G."/>
            <person name="Prestwich G.D."/>
            <person name="Lerner M.R."/>
        </authorList>
    </citation>
    <scope>PROTEIN SEQUENCE</scope>
</reference>
<comment type="function">
    <text>Present in the aqueous fluid surrounding olfactory sensory dendrites and are thought to aid in the capture and transport of hydrophobic odorants into and through this fluid.</text>
</comment>
<comment type="subunit">
    <text evidence="1">Homodimer.</text>
</comment>
<comment type="tissue specificity">
    <text>Antenna.</text>
</comment>
<comment type="similarity">
    <text evidence="1">Belongs to the PBP/GOBP family.</text>
</comment>
<keyword id="KW-0903">Direct protein sequencing</keyword>
<keyword id="KW-0552">Olfaction</keyword>
<keyword id="KW-0716">Sensory transduction</keyword>
<keyword id="KW-0813">Transport</keyword>
<feature type="chain" id="PRO_0000074485" description="General odorant-binding protein">
    <location>
        <begin position="1"/>
        <end position="18" status="greater than"/>
    </location>
</feature>
<feature type="non-terminal residue">
    <location>
        <position position="18"/>
    </location>
</feature>
<name>OBP_LYMDI</name>
<accession>P34173</accession>
<organism>
    <name type="scientific">Lymantria dispar</name>
    <name type="common">Gypsy moth</name>
    <name type="synonym">Porthetria dispar</name>
    <dbReference type="NCBI Taxonomy" id="13123"/>
    <lineage>
        <taxon>Eukaryota</taxon>
        <taxon>Metazoa</taxon>
        <taxon>Ecdysozoa</taxon>
        <taxon>Arthropoda</taxon>
        <taxon>Hexapoda</taxon>
        <taxon>Insecta</taxon>
        <taxon>Pterygota</taxon>
        <taxon>Neoptera</taxon>
        <taxon>Endopterygota</taxon>
        <taxon>Lepidoptera</taxon>
        <taxon>Glossata</taxon>
        <taxon>Ditrysia</taxon>
        <taxon>Noctuoidea</taxon>
        <taxon>Erebidae</taxon>
        <taxon>Lymantriinae</taxon>
        <taxon>Lymantria</taxon>
    </lineage>
</organism>